<name>RL10_COXBN</name>
<comment type="function">
    <text evidence="1">Forms part of the ribosomal stalk, playing a central role in the interaction of the ribosome with GTP-bound translation factors.</text>
</comment>
<comment type="subunit">
    <text evidence="1">Part of the ribosomal stalk of the 50S ribosomal subunit. The N-terminus interacts with L11 and the large rRNA to form the base of the stalk. The C-terminus forms an elongated spine to which L12 dimers bind in a sequential fashion forming a multimeric L10(L12)X complex.</text>
</comment>
<comment type="similarity">
    <text evidence="1">Belongs to the universal ribosomal protein uL10 family.</text>
</comment>
<organism>
    <name type="scientific">Coxiella burnetii (strain Dugway 5J108-111)</name>
    <dbReference type="NCBI Taxonomy" id="434922"/>
    <lineage>
        <taxon>Bacteria</taxon>
        <taxon>Pseudomonadati</taxon>
        <taxon>Pseudomonadota</taxon>
        <taxon>Gammaproteobacteria</taxon>
        <taxon>Legionellales</taxon>
        <taxon>Coxiellaceae</taxon>
        <taxon>Coxiella</taxon>
    </lineage>
</organism>
<gene>
    <name evidence="1" type="primary">rplJ</name>
    <name type="ordered locus">CBUD_1864</name>
</gene>
<accession>A9KD41</accession>
<protein>
    <recommendedName>
        <fullName evidence="1">Large ribosomal subunit protein uL10</fullName>
    </recommendedName>
    <alternativeName>
        <fullName evidence="2">50S ribosomal protein L10</fullName>
    </alternativeName>
</protein>
<proteinExistence type="inferred from homology"/>
<sequence length="174" mass="19122">MALNLEQKKAMVAEITDIANQAVSAVAADYRGLTVSEMSDLRKSAREARVHMRVYRNTLARRAFKETTYACLEEVLTGPIVLFFSQEEPGAAARLIEKFIKEHERLEVKGLALGGELLPAEKLKAVARLPSREEALSQLAAVLLAPVTKLVRTLNEPIAQVARVMAAVRDQKAA</sequence>
<keyword id="KW-0687">Ribonucleoprotein</keyword>
<keyword id="KW-0689">Ribosomal protein</keyword>
<keyword id="KW-0694">RNA-binding</keyword>
<keyword id="KW-0699">rRNA-binding</keyword>
<feature type="chain" id="PRO_1000079538" description="Large ribosomal subunit protein uL10">
    <location>
        <begin position="1"/>
        <end position="174"/>
    </location>
</feature>
<evidence type="ECO:0000255" key="1">
    <source>
        <dbReference type="HAMAP-Rule" id="MF_00362"/>
    </source>
</evidence>
<evidence type="ECO:0000305" key="2"/>
<reference key="1">
    <citation type="journal article" date="2009" name="Infect. Immun.">
        <title>Comparative genomics reveal extensive transposon-mediated genomic plasticity and diversity among potential effector proteins within the genus Coxiella.</title>
        <authorList>
            <person name="Beare P.A."/>
            <person name="Unsworth N."/>
            <person name="Andoh M."/>
            <person name="Voth D.E."/>
            <person name="Omsland A."/>
            <person name="Gilk S.D."/>
            <person name="Williams K.P."/>
            <person name="Sobral B.W."/>
            <person name="Kupko J.J. III"/>
            <person name="Porcella S.F."/>
            <person name="Samuel J.E."/>
            <person name="Heinzen R.A."/>
        </authorList>
    </citation>
    <scope>NUCLEOTIDE SEQUENCE [LARGE SCALE GENOMIC DNA]</scope>
    <source>
        <strain>Dugway 5J108-111</strain>
    </source>
</reference>
<dbReference type="EMBL" id="CP000733">
    <property type="protein sequence ID" value="ABS76567.1"/>
    <property type="molecule type" value="Genomic_DNA"/>
</dbReference>
<dbReference type="RefSeq" id="WP_005771616.1">
    <property type="nucleotide sequence ID" value="NC_009727.1"/>
</dbReference>
<dbReference type="SMR" id="A9KD41"/>
<dbReference type="KEGG" id="cbd:CBUD_1864"/>
<dbReference type="HOGENOM" id="CLU_092227_0_1_6"/>
<dbReference type="Proteomes" id="UP000008555">
    <property type="component" value="Chromosome"/>
</dbReference>
<dbReference type="GO" id="GO:0015934">
    <property type="term" value="C:large ribosomal subunit"/>
    <property type="evidence" value="ECO:0007669"/>
    <property type="project" value="InterPro"/>
</dbReference>
<dbReference type="GO" id="GO:0070180">
    <property type="term" value="F:large ribosomal subunit rRNA binding"/>
    <property type="evidence" value="ECO:0007669"/>
    <property type="project" value="UniProtKB-UniRule"/>
</dbReference>
<dbReference type="GO" id="GO:0003735">
    <property type="term" value="F:structural constituent of ribosome"/>
    <property type="evidence" value="ECO:0007669"/>
    <property type="project" value="InterPro"/>
</dbReference>
<dbReference type="GO" id="GO:0006412">
    <property type="term" value="P:translation"/>
    <property type="evidence" value="ECO:0007669"/>
    <property type="project" value="UniProtKB-UniRule"/>
</dbReference>
<dbReference type="CDD" id="cd05797">
    <property type="entry name" value="Ribosomal_L10"/>
    <property type="match status" value="1"/>
</dbReference>
<dbReference type="Gene3D" id="3.30.70.1730">
    <property type="match status" value="1"/>
</dbReference>
<dbReference type="Gene3D" id="6.10.250.290">
    <property type="match status" value="1"/>
</dbReference>
<dbReference type="HAMAP" id="MF_00362">
    <property type="entry name" value="Ribosomal_uL10"/>
    <property type="match status" value="1"/>
</dbReference>
<dbReference type="InterPro" id="IPR001790">
    <property type="entry name" value="Ribosomal_uL10"/>
</dbReference>
<dbReference type="InterPro" id="IPR043141">
    <property type="entry name" value="Ribosomal_uL10-like_sf"/>
</dbReference>
<dbReference type="InterPro" id="IPR022973">
    <property type="entry name" value="Ribosomal_uL10_bac"/>
</dbReference>
<dbReference type="InterPro" id="IPR047865">
    <property type="entry name" value="Ribosomal_uL10_bac_type"/>
</dbReference>
<dbReference type="InterPro" id="IPR002363">
    <property type="entry name" value="Ribosomal_uL10_CS_bac"/>
</dbReference>
<dbReference type="NCBIfam" id="NF000955">
    <property type="entry name" value="PRK00099.1-1"/>
    <property type="match status" value="1"/>
</dbReference>
<dbReference type="PANTHER" id="PTHR11560">
    <property type="entry name" value="39S RIBOSOMAL PROTEIN L10, MITOCHONDRIAL"/>
    <property type="match status" value="1"/>
</dbReference>
<dbReference type="Pfam" id="PF00466">
    <property type="entry name" value="Ribosomal_L10"/>
    <property type="match status" value="1"/>
</dbReference>
<dbReference type="SUPFAM" id="SSF160369">
    <property type="entry name" value="Ribosomal protein L10-like"/>
    <property type="match status" value="1"/>
</dbReference>
<dbReference type="PROSITE" id="PS01109">
    <property type="entry name" value="RIBOSOMAL_L10"/>
    <property type="match status" value="1"/>
</dbReference>